<feature type="chain" id="PRO_1000046272" description="Large ribosomal subunit protein uL11">
    <location>
        <begin position="1"/>
        <end position="143"/>
    </location>
</feature>
<dbReference type="EMBL" id="CP000699">
    <property type="protein sequence ID" value="ABQ68921.1"/>
    <property type="molecule type" value="Genomic_DNA"/>
</dbReference>
<dbReference type="SMR" id="A5V9F5"/>
<dbReference type="STRING" id="392499.Swit_2563"/>
<dbReference type="PaxDb" id="392499-Swit_2563"/>
<dbReference type="KEGG" id="swi:Swit_2563"/>
<dbReference type="eggNOG" id="COG0080">
    <property type="taxonomic scope" value="Bacteria"/>
</dbReference>
<dbReference type="HOGENOM" id="CLU_074237_2_0_5"/>
<dbReference type="OrthoDB" id="9802408at2"/>
<dbReference type="Proteomes" id="UP000001989">
    <property type="component" value="Chromosome"/>
</dbReference>
<dbReference type="GO" id="GO:0022625">
    <property type="term" value="C:cytosolic large ribosomal subunit"/>
    <property type="evidence" value="ECO:0007669"/>
    <property type="project" value="TreeGrafter"/>
</dbReference>
<dbReference type="GO" id="GO:0070180">
    <property type="term" value="F:large ribosomal subunit rRNA binding"/>
    <property type="evidence" value="ECO:0007669"/>
    <property type="project" value="UniProtKB-UniRule"/>
</dbReference>
<dbReference type="GO" id="GO:0003735">
    <property type="term" value="F:structural constituent of ribosome"/>
    <property type="evidence" value="ECO:0007669"/>
    <property type="project" value="InterPro"/>
</dbReference>
<dbReference type="GO" id="GO:0006412">
    <property type="term" value="P:translation"/>
    <property type="evidence" value="ECO:0007669"/>
    <property type="project" value="UniProtKB-UniRule"/>
</dbReference>
<dbReference type="CDD" id="cd00349">
    <property type="entry name" value="Ribosomal_L11"/>
    <property type="match status" value="1"/>
</dbReference>
<dbReference type="FunFam" id="1.10.10.250:FF:000001">
    <property type="entry name" value="50S ribosomal protein L11"/>
    <property type="match status" value="1"/>
</dbReference>
<dbReference type="FunFam" id="3.30.1550.10:FF:000001">
    <property type="entry name" value="50S ribosomal protein L11"/>
    <property type="match status" value="1"/>
</dbReference>
<dbReference type="Gene3D" id="1.10.10.250">
    <property type="entry name" value="Ribosomal protein L11, C-terminal domain"/>
    <property type="match status" value="1"/>
</dbReference>
<dbReference type="Gene3D" id="3.30.1550.10">
    <property type="entry name" value="Ribosomal protein L11/L12, N-terminal domain"/>
    <property type="match status" value="1"/>
</dbReference>
<dbReference type="HAMAP" id="MF_00736">
    <property type="entry name" value="Ribosomal_uL11"/>
    <property type="match status" value="1"/>
</dbReference>
<dbReference type="InterPro" id="IPR000911">
    <property type="entry name" value="Ribosomal_uL11"/>
</dbReference>
<dbReference type="InterPro" id="IPR006519">
    <property type="entry name" value="Ribosomal_uL11_bac-typ"/>
</dbReference>
<dbReference type="InterPro" id="IPR020783">
    <property type="entry name" value="Ribosomal_uL11_C"/>
</dbReference>
<dbReference type="InterPro" id="IPR036769">
    <property type="entry name" value="Ribosomal_uL11_C_sf"/>
</dbReference>
<dbReference type="InterPro" id="IPR020784">
    <property type="entry name" value="Ribosomal_uL11_N"/>
</dbReference>
<dbReference type="InterPro" id="IPR036796">
    <property type="entry name" value="Ribosomal_uL11_N_sf"/>
</dbReference>
<dbReference type="NCBIfam" id="TIGR01632">
    <property type="entry name" value="L11_bact"/>
    <property type="match status" value="1"/>
</dbReference>
<dbReference type="PANTHER" id="PTHR11661">
    <property type="entry name" value="60S RIBOSOMAL PROTEIN L12"/>
    <property type="match status" value="1"/>
</dbReference>
<dbReference type="PANTHER" id="PTHR11661:SF1">
    <property type="entry name" value="LARGE RIBOSOMAL SUBUNIT PROTEIN UL11M"/>
    <property type="match status" value="1"/>
</dbReference>
<dbReference type="Pfam" id="PF00298">
    <property type="entry name" value="Ribosomal_L11"/>
    <property type="match status" value="1"/>
</dbReference>
<dbReference type="Pfam" id="PF03946">
    <property type="entry name" value="Ribosomal_L11_N"/>
    <property type="match status" value="1"/>
</dbReference>
<dbReference type="SMART" id="SM00649">
    <property type="entry name" value="RL11"/>
    <property type="match status" value="1"/>
</dbReference>
<dbReference type="SUPFAM" id="SSF54747">
    <property type="entry name" value="Ribosomal L11/L12e N-terminal domain"/>
    <property type="match status" value="1"/>
</dbReference>
<dbReference type="SUPFAM" id="SSF46906">
    <property type="entry name" value="Ribosomal protein L11, C-terminal domain"/>
    <property type="match status" value="1"/>
</dbReference>
<protein>
    <recommendedName>
        <fullName evidence="1">Large ribosomal subunit protein uL11</fullName>
    </recommendedName>
    <alternativeName>
        <fullName evidence="2">50S ribosomal protein L11</fullName>
    </alternativeName>
</protein>
<comment type="function">
    <text evidence="1">Forms part of the ribosomal stalk which helps the ribosome interact with GTP-bound translation factors.</text>
</comment>
<comment type="subunit">
    <text evidence="1">Part of the ribosomal stalk of the 50S ribosomal subunit. Interacts with L10 and the large rRNA to form the base of the stalk. L10 forms an elongated spine to which L12 dimers bind in a sequential fashion forming a multimeric L10(L12)X complex.</text>
</comment>
<comment type="PTM">
    <text evidence="1">One or more lysine residues are methylated.</text>
</comment>
<comment type="similarity">
    <text evidence="1">Belongs to the universal ribosomal protein uL11 family.</text>
</comment>
<gene>
    <name evidence="1" type="primary">rplK</name>
    <name type="ordered locus">Swit_2563</name>
</gene>
<sequence>MAKKITGYIKLQVPAGKANPSPPIGPALGQRGVNIMDFCKAFNAQTGDFEVGTPLPTIITVYADRSFSFVTKTPPATYLIKKAINLKSGSKEPGKASAGKIKRSQLAQIAEVKMKDLNANDIESATRIIEGSARAMGLEVVEG</sequence>
<proteinExistence type="inferred from homology"/>
<name>RL11_RHIWR</name>
<reference key="1">
    <citation type="journal article" date="2010" name="J. Bacteriol.">
        <title>Genome sequence of the dioxin-mineralizing bacterium Sphingomonas wittichii RW1.</title>
        <authorList>
            <person name="Miller T.R."/>
            <person name="Delcher A.L."/>
            <person name="Salzberg S.L."/>
            <person name="Saunders E."/>
            <person name="Detter J.C."/>
            <person name="Halden R.U."/>
        </authorList>
    </citation>
    <scope>NUCLEOTIDE SEQUENCE [LARGE SCALE GENOMIC DNA]</scope>
    <source>
        <strain>DSM 6014 / CCUG 31198 / JCM 15750 / NBRC 105917 / EY 4224 / RW1</strain>
    </source>
</reference>
<organism>
    <name type="scientific">Rhizorhabdus wittichii (strain DSM 6014 / CCUG 31198 / JCM 15750 / NBRC 105917 / EY 4224 / RW1)</name>
    <name type="common">Sphingomonas wittichii</name>
    <dbReference type="NCBI Taxonomy" id="392499"/>
    <lineage>
        <taxon>Bacteria</taxon>
        <taxon>Pseudomonadati</taxon>
        <taxon>Pseudomonadota</taxon>
        <taxon>Alphaproteobacteria</taxon>
        <taxon>Sphingomonadales</taxon>
        <taxon>Sphingomonadaceae</taxon>
        <taxon>Rhizorhabdus</taxon>
    </lineage>
</organism>
<accession>A5V9F5</accession>
<evidence type="ECO:0000255" key="1">
    <source>
        <dbReference type="HAMAP-Rule" id="MF_00736"/>
    </source>
</evidence>
<evidence type="ECO:0000305" key="2"/>
<keyword id="KW-0488">Methylation</keyword>
<keyword id="KW-1185">Reference proteome</keyword>
<keyword id="KW-0687">Ribonucleoprotein</keyword>
<keyword id="KW-0689">Ribosomal protein</keyword>
<keyword id="KW-0694">RNA-binding</keyword>
<keyword id="KW-0699">rRNA-binding</keyword>